<keyword id="KW-0002">3D-structure</keyword>
<keyword id="KW-0903">Direct protein sequencing</keyword>
<keyword id="KW-1015">Disulfide bond</keyword>
<keyword id="KW-0960">Knottin</keyword>
<keyword id="KW-0611">Plant defense</keyword>
<dbReference type="PDB" id="2KUX">
    <property type="method" value="NMR"/>
    <property type="chains" value="A=1-30"/>
</dbReference>
<dbReference type="PDBsum" id="2KUX"/>
<dbReference type="SMR" id="P58456"/>
<dbReference type="EvolutionaryTrace" id="P58456"/>
<dbReference type="GO" id="GO:0006952">
    <property type="term" value="P:defense response"/>
    <property type="evidence" value="ECO:0007669"/>
    <property type="project" value="UniProtKB-KW"/>
</dbReference>
<dbReference type="InterPro" id="IPR005535">
    <property type="entry name" value="Cyclotide"/>
</dbReference>
<dbReference type="InterPro" id="IPR012323">
    <property type="entry name" value="Cyclotide_bracelet_CS"/>
</dbReference>
<dbReference type="InterPro" id="IPR036146">
    <property type="entry name" value="Cyclotide_sf"/>
</dbReference>
<dbReference type="Pfam" id="PF03784">
    <property type="entry name" value="Cyclotide"/>
    <property type="match status" value="1"/>
</dbReference>
<dbReference type="PIRSF" id="PIRSF037891">
    <property type="entry name" value="Cycloviolacin"/>
    <property type="match status" value="1"/>
</dbReference>
<dbReference type="SUPFAM" id="SSF57038">
    <property type="entry name" value="Cyclotides"/>
    <property type="match status" value="1"/>
</dbReference>
<dbReference type="PROSITE" id="PS51052">
    <property type="entry name" value="CYCLOTIDE"/>
    <property type="match status" value="1"/>
</dbReference>
<dbReference type="PROSITE" id="PS60008">
    <property type="entry name" value="CYCLOTIDE_BRACELET"/>
    <property type="match status" value="1"/>
</dbReference>
<evidence type="ECO:0000255" key="1">
    <source>
        <dbReference type="PROSITE-ProRule" id="PRU00395"/>
    </source>
</evidence>
<evidence type="ECO:0000269" key="2">
    <source>
    </source>
</evidence>
<evidence type="ECO:0000305" key="3"/>
<evidence type="ECO:0007829" key="4">
    <source>
        <dbReference type="PDB" id="2KUX"/>
    </source>
</evidence>
<protein>
    <recommendedName>
        <fullName>Kalata-B5</fullName>
    </recommendedName>
</protein>
<comment type="function">
    <text>Probably participates in a plant defense mechanism.</text>
</comment>
<comment type="domain">
    <text>The presence of a 'disulfide through disulfide knot' structurally defines this protein as a knottin.</text>
</comment>
<comment type="PTM">
    <text>This is a cyclic peptide.</text>
</comment>
<comment type="mass spectrometry"/>
<comment type="similarity">
    <text evidence="1">Belongs to the cyclotide family. Bracelet subfamily.</text>
</comment>
<comment type="caution">
    <text evidence="3">This peptide is cyclic. The start position was chosen by similarity to OAK1 (kalata-B1) for which the DNA sequence is known.</text>
</comment>
<name>KAB5_OLDAF</name>
<feature type="peptide" id="PRO_0000043630" description="Kalata-B5">
    <location>
        <begin position="1"/>
        <end position="30"/>
    </location>
</feature>
<feature type="disulfide bond">
    <location>
        <begin position="4"/>
        <end position="20"/>
    </location>
</feature>
<feature type="disulfide bond">
    <location>
        <begin position="8"/>
        <end position="22"/>
    </location>
</feature>
<feature type="disulfide bond">
    <location>
        <begin position="13"/>
        <end position="27"/>
    </location>
</feature>
<feature type="cross-link" description="Cyclopeptide (Gly-Asn)">
    <location>
        <begin position="1"/>
        <end position="30"/>
    </location>
</feature>
<feature type="strand" evidence="4">
    <location>
        <begin position="2"/>
        <end position="7"/>
    </location>
</feature>
<feature type="strand" evidence="4">
    <location>
        <begin position="9"/>
        <end position="11"/>
    </location>
</feature>
<feature type="helix" evidence="4">
    <location>
        <begin position="15"/>
        <end position="18"/>
    </location>
</feature>
<feature type="strand" evidence="4">
    <location>
        <begin position="21"/>
        <end position="23"/>
    </location>
</feature>
<feature type="strand" evidence="4">
    <location>
        <begin position="26"/>
        <end position="29"/>
    </location>
</feature>
<proteinExistence type="evidence at protein level"/>
<accession>P58456</accession>
<organism>
    <name type="scientific">Oldenlandia affinis</name>
    <dbReference type="NCBI Taxonomy" id="60225"/>
    <lineage>
        <taxon>Eukaryota</taxon>
        <taxon>Viridiplantae</taxon>
        <taxon>Streptophyta</taxon>
        <taxon>Embryophyta</taxon>
        <taxon>Tracheophyta</taxon>
        <taxon>Spermatophyta</taxon>
        <taxon>Magnoliopsida</taxon>
        <taxon>eudicotyledons</taxon>
        <taxon>Gunneridae</taxon>
        <taxon>Pentapetalae</taxon>
        <taxon>asterids</taxon>
        <taxon>lamiids</taxon>
        <taxon>Gentianales</taxon>
        <taxon>Rubiaceae</taxon>
        <taxon>Rubioideae</taxon>
        <taxon>Spermacoceae</taxon>
        <taxon>Hedyotis-Oldenlandia complex</taxon>
        <taxon>Oldenlandia</taxon>
    </lineage>
</organism>
<sequence>GTPCGESCVYIPCISGVIGCSCTDKVCYLN</sequence>
<reference key="1">
    <citation type="journal article" date="1999" name="J. Mol. Biol.">
        <title>Plant cyclotides: a unique family of cyclic and knotted proteins that defines the cyclic cystine knot structural motif.</title>
        <authorList>
            <person name="Craik D.J."/>
            <person name="Daly N.L."/>
            <person name="Bond T."/>
            <person name="Waine C."/>
        </authorList>
    </citation>
    <scope>PROTEIN SEQUENCE</scope>
</reference>
<reference key="2">
    <citation type="journal article" date="2007" name="ChemBioChem">
        <title>The cyclotide fingerprint in Oldenlandia affinis: elucidation of chemically modified, linear and novel macrocyclic peptides.</title>
        <authorList>
            <person name="Plan M.R.R."/>
            <person name="Goeransson U."/>
            <person name="Clark R.J."/>
            <person name="Daly N.L."/>
            <person name="Colgrave M.L."/>
            <person name="Craik D.J."/>
        </authorList>
    </citation>
    <scope>PROTEIN SEQUENCE</scope>
    <scope>MASS SPECTROMETRY</scope>
</reference>